<keyword id="KW-1185">Reference proteome</keyword>
<feature type="chain" id="PRO_0000299219" description="Protein beta">
    <location>
        <begin position="1"/>
        <end position="107"/>
    </location>
</feature>
<reference key="1">
    <citation type="journal article" date="1997" name="J. Gen. Virol.">
        <title>Genome organization and transcription strategy in the complex GNS-L intergenic region of bovine ephemeral fever rhabdovirus.</title>
        <authorList>
            <person name="McWilliam S.M."/>
            <person name="Kongsuwan K."/>
            <person name="Cowley J.A."/>
            <person name="Byrne K.A."/>
            <person name="Walker P.J."/>
        </authorList>
    </citation>
    <scope>NUCLEOTIDE SEQUENCE [GENOMIC RNA]</scope>
</reference>
<proteinExistence type="predicted"/>
<sequence length="107" mass="12288">MDFIRCHVAMQIINFKALEIDKRSLLGILVIKNIKNLHRSNQLLTRLSDLMVPSVIHNGEFVMRNDKSDKLWIFVGESWASLDLEDLNGVRENVFNISKTVPLLIQG</sequence>
<organism>
    <name type="scientific">Bovine ephemeral fever virus (strain BB7721)</name>
    <name type="common">BEFV</name>
    <dbReference type="NCBI Taxonomy" id="928297"/>
    <lineage>
        <taxon>Viruses</taxon>
        <taxon>Riboviria</taxon>
        <taxon>Orthornavirae</taxon>
        <taxon>Negarnaviricota</taxon>
        <taxon>Haploviricotina</taxon>
        <taxon>Monjiviricetes</taxon>
        <taxon>Mononegavirales</taxon>
        <taxon>Rhabdoviridae</taxon>
        <taxon>Alpharhabdovirinae</taxon>
        <taxon>Ephemerovirus</taxon>
        <taxon>Ephemerovirus febris</taxon>
    </lineage>
</organism>
<organismHost>
    <name type="scientific">Bos taurus</name>
    <name type="common">Bovine</name>
    <dbReference type="NCBI Taxonomy" id="9913"/>
</organismHost>
<organismHost>
    <name type="scientific">Bubalus bubalis</name>
    <name type="common">Domestic water buffalo</name>
    <dbReference type="NCBI Taxonomy" id="89462"/>
</organismHost>
<organismHost>
    <name type="scientific">Culicoides</name>
    <dbReference type="NCBI Taxonomy" id="58271"/>
</organismHost>
<organismHost>
    <name type="scientific">Syncerus caffer</name>
    <name type="common">African buffalo</name>
    <dbReference type="NCBI Taxonomy" id="9970"/>
</organismHost>
<protein>
    <recommendedName>
        <fullName>Protein beta</fullName>
    </recommendedName>
</protein>
<name>VPB_BEFVB</name>
<accession>Q65478</accession>
<gene>
    <name type="primary">beta</name>
</gene>
<dbReference type="EMBL" id="U18106">
    <property type="protein sequence ID" value="AAB63051.1"/>
    <property type="molecule type" value="Genomic_RNA"/>
</dbReference>
<dbReference type="EMBL" id="AF234533">
    <property type="protein sequence ID" value="AAG10418.1"/>
    <property type="molecule type" value="Genomic_DNA"/>
</dbReference>
<dbReference type="RefSeq" id="NP_065407.1">
    <property type="nucleotide sequence ID" value="NC_002526.1"/>
</dbReference>
<dbReference type="GeneID" id="911732"/>
<dbReference type="KEGG" id="vg:911732"/>
<dbReference type="Proteomes" id="UP000008588">
    <property type="component" value="Segment"/>
</dbReference>